<sequence>MKKIKIISFSVAYLILLTPIYASAMHIMEGFLPPLWAAIWSVISLPFIVGGFSKIKKITDESPNMKLLLGLVGAFVFVLSALKLPSVTGSTSHPTGVGLGTIIFGPLPMAVIGLIVLIFQALLLAHGGITTLGANVFSMAIVGPFAGYFIFKAIKDKNRSLAVFLAAMLADLITYIVTSLQLALAHPDAVNGIVGSFTKFMGIFAITQIPLAIGEGILTLIVYNLLVEYQKEGGFNLEKTH</sequence>
<accession>E3PSD4</accession>
<feature type="signal peptide" evidence="1">
    <location>
        <begin position="1"/>
        <end position="24"/>
    </location>
</feature>
<feature type="chain" id="PRO_0000411139" description="Cobalt transport protein CbiM">
    <location>
        <begin position="25"/>
        <end position="241"/>
    </location>
</feature>
<feature type="transmembrane region" description="Helical" evidence="1">
    <location>
        <begin position="30"/>
        <end position="50"/>
    </location>
</feature>
<feature type="transmembrane region" description="Helical" evidence="1">
    <location>
        <begin position="67"/>
        <end position="87"/>
    </location>
</feature>
<feature type="transmembrane region" description="Helical" evidence="1">
    <location>
        <begin position="99"/>
        <end position="119"/>
    </location>
</feature>
<feature type="transmembrane region" description="Helical" evidence="1">
    <location>
        <begin position="131"/>
        <end position="151"/>
    </location>
</feature>
<feature type="transmembrane region" description="Helical" evidence="1">
    <location>
        <begin position="160"/>
        <end position="180"/>
    </location>
</feature>
<feature type="transmembrane region" description="Helical" evidence="1">
    <location>
        <begin position="202"/>
        <end position="222"/>
    </location>
</feature>
<keyword id="KW-1003">Cell membrane</keyword>
<keyword id="KW-0169">Cobalamin biosynthesis</keyword>
<keyword id="KW-0170">Cobalt</keyword>
<keyword id="KW-0171">Cobalt transport</keyword>
<keyword id="KW-0406">Ion transport</keyword>
<keyword id="KW-0472">Membrane</keyword>
<keyword id="KW-1185">Reference proteome</keyword>
<keyword id="KW-0732">Signal</keyword>
<keyword id="KW-0812">Transmembrane</keyword>
<keyword id="KW-1133">Transmembrane helix</keyword>
<keyword id="KW-0813">Transport</keyword>
<evidence type="ECO:0000255" key="1">
    <source>
        <dbReference type="HAMAP-Rule" id="MF_01462"/>
    </source>
</evidence>
<protein>
    <recommendedName>
        <fullName evidence="1">Cobalt transport protein CbiM</fullName>
    </recommendedName>
    <alternativeName>
        <fullName evidence="1">Energy-coupling factor transporter probable substrate-capture protein CbiM</fullName>
        <shortName evidence="1">ECF transporter S component CbiM</shortName>
    </alternativeName>
</protein>
<reference key="1">
    <citation type="journal article" date="2010" name="BMC Genomics">
        <title>Clostridium sticklandii, a specialist in amino acid degradation:revisiting its metabolism through its genome sequence.</title>
        <authorList>
            <person name="Fonknechten N."/>
            <person name="Chaussonnerie S."/>
            <person name="Tricot S."/>
            <person name="Lajus A."/>
            <person name="Andreesen J.R."/>
            <person name="Perchat N."/>
            <person name="Pelletier E."/>
            <person name="Gouyvenoux M."/>
            <person name="Barbe V."/>
            <person name="Salanoubat M."/>
            <person name="Le Paslier D."/>
            <person name="Weissenbach J."/>
            <person name="Cohen G.N."/>
            <person name="Kreimeyer A."/>
        </authorList>
    </citation>
    <scope>NUCLEOTIDE SEQUENCE [LARGE SCALE GENOMIC DNA]</scope>
    <source>
        <strain>ATCC 12662 / DSM 519 / JCM 1433 / CCUG 9281 / NCIMB 10654 / HF</strain>
    </source>
</reference>
<proteinExistence type="inferred from homology"/>
<name>CBIM_ACESD</name>
<gene>
    <name evidence="1" type="primary">cbiM</name>
    <name type="ordered locus">CLOST_1668</name>
</gene>
<comment type="function">
    <text evidence="1">Part of the energy-coupling factor (ECF) transporter complex CbiMNOQ involved in cobalt import.</text>
</comment>
<comment type="pathway">
    <text evidence="1">Cofactor biosynthesis; adenosylcobalamin biosynthesis.</text>
</comment>
<comment type="subunit">
    <text evidence="1">Forms an energy-coupling factor (ECF) transporter complex composed of an ATP-binding protein (A component, CbiO), a transmembrane protein (T component, CbiQ) and 2 possible substrate-capture proteins (S components, CbiM and CbiN) of unknown stoichimetry.</text>
</comment>
<comment type="subcellular location">
    <subcellularLocation>
        <location evidence="1">Cell membrane</location>
        <topology evidence="1">Multi-pass membrane protein</topology>
    </subcellularLocation>
</comment>
<comment type="similarity">
    <text evidence="1">Belongs to the CbiM family.</text>
</comment>
<dbReference type="EMBL" id="FP565809">
    <property type="protein sequence ID" value="CBH21788.1"/>
    <property type="molecule type" value="Genomic_DNA"/>
</dbReference>
<dbReference type="SMR" id="E3PSD4"/>
<dbReference type="STRING" id="1511.CLOST_1668"/>
<dbReference type="KEGG" id="cst:CLOST_1668"/>
<dbReference type="eggNOG" id="COG0310">
    <property type="taxonomic scope" value="Bacteria"/>
</dbReference>
<dbReference type="HOGENOM" id="CLU_052508_3_0_9"/>
<dbReference type="UniPathway" id="UPA00148"/>
<dbReference type="Proteomes" id="UP000007041">
    <property type="component" value="Chromosome"/>
</dbReference>
<dbReference type="GO" id="GO:0043190">
    <property type="term" value="C:ATP-binding cassette (ABC) transporter complex"/>
    <property type="evidence" value="ECO:0007669"/>
    <property type="project" value="InterPro"/>
</dbReference>
<dbReference type="GO" id="GO:0015087">
    <property type="term" value="F:cobalt ion transmembrane transporter activity"/>
    <property type="evidence" value="ECO:0007669"/>
    <property type="project" value="UniProtKB-UniRule"/>
</dbReference>
<dbReference type="GO" id="GO:0009236">
    <property type="term" value="P:cobalamin biosynthetic process"/>
    <property type="evidence" value="ECO:0007669"/>
    <property type="project" value="UniProtKB-UniRule"/>
</dbReference>
<dbReference type="FunFam" id="1.10.1760.20:FF:000001">
    <property type="entry name" value="Cobalt transport protein CbiM"/>
    <property type="match status" value="1"/>
</dbReference>
<dbReference type="Gene3D" id="1.10.1760.20">
    <property type="match status" value="1"/>
</dbReference>
<dbReference type="HAMAP" id="MF_01462">
    <property type="entry name" value="CbiM"/>
    <property type="match status" value="1"/>
</dbReference>
<dbReference type="InterPro" id="IPR018024">
    <property type="entry name" value="CbiM"/>
</dbReference>
<dbReference type="InterPro" id="IPR002751">
    <property type="entry name" value="CbiM/NikMN"/>
</dbReference>
<dbReference type="NCBIfam" id="TIGR00123">
    <property type="entry name" value="cbiM"/>
    <property type="match status" value="1"/>
</dbReference>
<dbReference type="NCBIfam" id="NF006184">
    <property type="entry name" value="PRK08319.1"/>
    <property type="match status" value="1"/>
</dbReference>
<dbReference type="PANTHER" id="PTHR43627">
    <property type="match status" value="1"/>
</dbReference>
<dbReference type="PANTHER" id="PTHR43627:SF1">
    <property type="entry name" value="COBALT TRANSPORT PROTEIN CBIM"/>
    <property type="match status" value="1"/>
</dbReference>
<dbReference type="Pfam" id="PF01891">
    <property type="entry name" value="CbiM"/>
    <property type="match status" value="1"/>
</dbReference>
<organism>
    <name type="scientific">Acetoanaerobium sticklandii (strain ATCC 12662 / DSM 519 / JCM 1433 / CCUG 9281 / NCIMB 10654 / HF)</name>
    <name type="common">Clostridium sticklandii</name>
    <dbReference type="NCBI Taxonomy" id="499177"/>
    <lineage>
        <taxon>Bacteria</taxon>
        <taxon>Bacillati</taxon>
        <taxon>Bacillota</taxon>
        <taxon>Clostridia</taxon>
        <taxon>Peptostreptococcales</taxon>
        <taxon>Filifactoraceae</taxon>
        <taxon>Acetoanaerobium</taxon>
    </lineage>
</organism>